<sequence>MVLMIVSGRSGSGKSVALRALEDMGFYCVDNLPVVLLPDLARTLADRQISAAVSIDVRNIPESPEIFEQAMNNLPGAFSPQLLFLDADRNTLIRRYSDTRRLHPLSSKNLSLESAIDKESDLLEPLRSRADLIVDTSEMSVHELAEMLRTRLLGKRERELTMVFESFGFKHGIPIDADYVFDVRFLPNPHWDPKLRPMTGLDKPVAAFLDRHTEVHNFIYQTRSYLELWLPMLETNNRSYLTVAIGCTGGKHRSVYIAEQLADYFRSRGKNVQSRHRTLEKRKT</sequence>
<feature type="chain" id="PRO_0000107751" description="RNase adapter protein RapZ">
    <location>
        <begin position="1"/>
        <end position="284"/>
    </location>
</feature>
<feature type="region of interest" description="RNA-binding" evidence="1">
    <location>
        <begin position="266"/>
        <end position="284"/>
    </location>
</feature>
<feature type="binding site" evidence="1">
    <location>
        <begin position="8"/>
        <end position="15"/>
    </location>
    <ligand>
        <name>ATP</name>
        <dbReference type="ChEBI" id="CHEBI:30616"/>
    </ligand>
</feature>
<feature type="binding site" evidence="1">
    <location>
        <begin position="56"/>
        <end position="59"/>
    </location>
    <ligand>
        <name>GTP</name>
        <dbReference type="ChEBI" id="CHEBI:37565"/>
    </ligand>
</feature>
<protein>
    <recommendedName>
        <fullName evidence="1">RNase adapter protein RapZ</fullName>
    </recommendedName>
</protein>
<accession>Q8Z3G1</accession>
<proteinExistence type="inferred from homology"/>
<comment type="function">
    <text evidence="1">Modulates the synthesis of GlmS, by affecting the processing and stability of the regulatory small RNA GlmZ. When glucosamine-6-phosphate (GlcN6P) concentrations are high in the cell, RapZ binds GlmZ and targets it to cleavage by RNase E. Consequently, GlmZ is inactivated and unable to activate GlmS synthesis. Under low GlcN6P concentrations, RapZ is sequestered and inactivated by an other regulatory small RNA, GlmY, preventing GlmZ degradation and leading to synthesis of GlmS.</text>
</comment>
<comment type="subunit">
    <text evidence="1">Homotrimer.</text>
</comment>
<comment type="similarity">
    <text evidence="1">Belongs to the RapZ-like family. RapZ subfamily.</text>
</comment>
<name>RAPZ_SALTI</name>
<gene>
    <name evidence="1" type="primary">rapZ</name>
    <name type="ordered locus">STY3502</name>
    <name type="ordered locus">t3240</name>
</gene>
<keyword id="KW-0067">ATP-binding</keyword>
<keyword id="KW-0342">GTP-binding</keyword>
<keyword id="KW-0547">Nucleotide-binding</keyword>
<keyword id="KW-0694">RNA-binding</keyword>
<reference key="1">
    <citation type="journal article" date="2001" name="Nature">
        <title>Complete genome sequence of a multiple drug resistant Salmonella enterica serovar Typhi CT18.</title>
        <authorList>
            <person name="Parkhill J."/>
            <person name="Dougan G."/>
            <person name="James K.D."/>
            <person name="Thomson N.R."/>
            <person name="Pickard D."/>
            <person name="Wain J."/>
            <person name="Churcher C.M."/>
            <person name="Mungall K.L."/>
            <person name="Bentley S.D."/>
            <person name="Holden M.T.G."/>
            <person name="Sebaihia M."/>
            <person name="Baker S."/>
            <person name="Basham D."/>
            <person name="Brooks K."/>
            <person name="Chillingworth T."/>
            <person name="Connerton P."/>
            <person name="Cronin A."/>
            <person name="Davis P."/>
            <person name="Davies R.M."/>
            <person name="Dowd L."/>
            <person name="White N."/>
            <person name="Farrar J."/>
            <person name="Feltwell T."/>
            <person name="Hamlin N."/>
            <person name="Haque A."/>
            <person name="Hien T.T."/>
            <person name="Holroyd S."/>
            <person name="Jagels K."/>
            <person name="Krogh A."/>
            <person name="Larsen T.S."/>
            <person name="Leather S."/>
            <person name="Moule S."/>
            <person name="O'Gaora P."/>
            <person name="Parry C."/>
            <person name="Quail M.A."/>
            <person name="Rutherford K.M."/>
            <person name="Simmonds M."/>
            <person name="Skelton J."/>
            <person name="Stevens K."/>
            <person name="Whitehead S."/>
            <person name="Barrell B.G."/>
        </authorList>
    </citation>
    <scope>NUCLEOTIDE SEQUENCE [LARGE SCALE GENOMIC DNA]</scope>
    <source>
        <strain>CT18</strain>
    </source>
</reference>
<reference key="2">
    <citation type="journal article" date="2003" name="J. Bacteriol.">
        <title>Comparative genomics of Salmonella enterica serovar Typhi strains Ty2 and CT18.</title>
        <authorList>
            <person name="Deng W."/>
            <person name="Liou S.-R."/>
            <person name="Plunkett G. III"/>
            <person name="Mayhew G.F."/>
            <person name="Rose D.J."/>
            <person name="Burland V."/>
            <person name="Kodoyianni V."/>
            <person name="Schwartz D.C."/>
            <person name="Blattner F.R."/>
        </authorList>
    </citation>
    <scope>NUCLEOTIDE SEQUENCE [LARGE SCALE GENOMIC DNA]</scope>
    <source>
        <strain>ATCC 700931 / Ty2</strain>
    </source>
</reference>
<dbReference type="EMBL" id="AL513382">
    <property type="protein sequence ID" value="CAD07840.1"/>
    <property type="molecule type" value="Genomic_DNA"/>
</dbReference>
<dbReference type="EMBL" id="AE014613">
    <property type="protein sequence ID" value="AAO70776.1"/>
    <property type="molecule type" value="Genomic_DNA"/>
</dbReference>
<dbReference type="RefSeq" id="NP_457702.1">
    <property type="nucleotide sequence ID" value="NC_003198.1"/>
</dbReference>
<dbReference type="RefSeq" id="WP_000243746.1">
    <property type="nucleotide sequence ID" value="NZ_WSUR01000003.1"/>
</dbReference>
<dbReference type="SMR" id="Q8Z3G1"/>
<dbReference type="STRING" id="220341.gene:17587353"/>
<dbReference type="KEGG" id="stt:t3240"/>
<dbReference type="KEGG" id="sty:STY3502"/>
<dbReference type="PATRIC" id="fig|220341.7.peg.3566"/>
<dbReference type="eggNOG" id="COG1660">
    <property type="taxonomic scope" value="Bacteria"/>
</dbReference>
<dbReference type="HOGENOM" id="CLU_059558_1_1_6"/>
<dbReference type="OMA" id="GFKHGVP"/>
<dbReference type="OrthoDB" id="9784461at2"/>
<dbReference type="Proteomes" id="UP000000541">
    <property type="component" value="Chromosome"/>
</dbReference>
<dbReference type="Proteomes" id="UP000002670">
    <property type="component" value="Chromosome"/>
</dbReference>
<dbReference type="GO" id="GO:0005524">
    <property type="term" value="F:ATP binding"/>
    <property type="evidence" value="ECO:0007669"/>
    <property type="project" value="UniProtKB-UniRule"/>
</dbReference>
<dbReference type="GO" id="GO:0005525">
    <property type="term" value="F:GTP binding"/>
    <property type="evidence" value="ECO:0007669"/>
    <property type="project" value="UniProtKB-UniRule"/>
</dbReference>
<dbReference type="GO" id="GO:0003723">
    <property type="term" value="F:RNA binding"/>
    <property type="evidence" value="ECO:0007669"/>
    <property type="project" value="UniProtKB-KW"/>
</dbReference>
<dbReference type="Gene3D" id="3.40.50.300">
    <property type="entry name" value="P-loop containing nucleotide triphosphate hydrolases"/>
    <property type="match status" value="1"/>
</dbReference>
<dbReference type="HAMAP" id="MF_00636">
    <property type="entry name" value="RapZ_like"/>
    <property type="match status" value="1"/>
</dbReference>
<dbReference type="InterPro" id="IPR027417">
    <property type="entry name" value="P-loop_NTPase"/>
</dbReference>
<dbReference type="InterPro" id="IPR005337">
    <property type="entry name" value="RapZ-like"/>
</dbReference>
<dbReference type="InterPro" id="IPR053930">
    <property type="entry name" value="RapZ-like_N"/>
</dbReference>
<dbReference type="InterPro" id="IPR053931">
    <property type="entry name" value="RapZ_C"/>
</dbReference>
<dbReference type="NCBIfam" id="NF003828">
    <property type="entry name" value="PRK05416.1"/>
    <property type="match status" value="1"/>
</dbReference>
<dbReference type="PANTHER" id="PTHR30448">
    <property type="entry name" value="RNASE ADAPTER PROTEIN RAPZ"/>
    <property type="match status" value="1"/>
</dbReference>
<dbReference type="PANTHER" id="PTHR30448:SF0">
    <property type="entry name" value="RNASE ADAPTER PROTEIN RAPZ"/>
    <property type="match status" value="1"/>
</dbReference>
<dbReference type="Pfam" id="PF22740">
    <property type="entry name" value="PapZ_C"/>
    <property type="match status" value="1"/>
</dbReference>
<dbReference type="Pfam" id="PF03668">
    <property type="entry name" value="RapZ-like_N"/>
    <property type="match status" value="1"/>
</dbReference>
<dbReference type="PIRSF" id="PIRSF005052">
    <property type="entry name" value="P-loopkin"/>
    <property type="match status" value="1"/>
</dbReference>
<dbReference type="SUPFAM" id="SSF52540">
    <property type="entry name" value="P-loop containing nucleoside triphosphate hydrolases"/>
    <property type="match status" value="1"/>
</dbReference>
<organism>
    <name type="scientific">Salmonella typhi</name>
    <dbReference type="NCBI Taxonomy" id="90370"/>
    <lineage>
        <taxon>Bacteria</taxon>
        <taxon>Pseudomonadati</taxon>
        <taxon>Pseudomonadota</taxon>
        <taxon>Gammaproteobacteria</taxon>
        <taxon>Enterobacterales</taxon>
        <taxon>Enterobacteriaceae</taxon>
        <taxon>Salmonella</taxon>
    </lineage>
</organism>
<evidence type="ECO:0000255" key="1">
    <source>
        <dbReference type="HAMAP-Rule" id="MF_00636"/>
    </source>
</evidence>